<organism>
    <name type="scientific">Nitrobacter hamburgensis (strain DSM 10229 / NCIMB 13809 / X14)</name>
    <dbReference type="NCBI Taxonomy" id="323097"/>
    <lineage>
        <taxon>Bacteria</taxon>
        <taxon>Pseudomonadati</taxon>
        <taxon>Pseudomonadota</taxon>
        <taxon>Alphaproteobacteria</taxon>
        <taxon>Hyphomicrobiales</taxon>
        <taxon>Nitrobacteraceae</taxon>
        <taxon>Nitrobacter</taxon>
    </lineage>
</organism>
<accession>Q1QF31</accession>
<feature type="chain" id="PRO_0000334346" description="Na(+)/H(+) antiporter NhaA">
    <location>
        <begin position="1"/>
        <end position="408"/>
    </location>
</feature>
<feature type="transmembrane region" description="Helical" evidence="1">
    <location>
        <begin position="42"/>
        <end position="62"/>
    </location>
</feature>
<feature type="transmembrane region" description="Helical" evidence="1">
    <location>
        <begin position="69"/>
        <end position="89"/>
    </location>
</feature>
<feature type="transmembrane region" description="Helical" evidence="1">
    <location>
        <begin position="110"/>
        <end position="130"/>
    </location>
</feature>
<feature type="transmembrane region" description="Helical" evidence="1">
    <location>
        <begin position="140"/>
        <end position="160"/>
    </location>
</feature>
<feature type="transmembrane region" description="Helical" evidence="1">
    <location>
        <begin position="169"/>
        <end position="189"/>
    </location>
</feature>
<feature type="transmembrane region" description="Helical" evidence="1">
    <location>
        <begin position="192"/>
        <end position="212"/>
    </location>
</feature>
<feature type="transmembrane region" description="Helical" evidence="1">
    <location>
        <begin position="215"/>
        <end position="235"/>
    </location>
</feature>
<feature type="transmembrane region" description="Helical" evidence="1">
    <location>
        <begin position="238"/>
        <end position="258"/>
    </location>
</feature>
<feature type="transmembrane region" description="Helical" evidence="1">
    <location>
        <begin position="277"/>
        <end position="297"/>
    </location>
</feature>
<feature type="transmembrane region" description="Helical" evidence="1">
    <location>
        <begin position="312"/>
        <end position="332"/>
    </location>
</feature>
<feature type="transmembrane region" description="Helical" evidence="1">
    <location>
        <begin position="346"/>
        <end position="366"/>
    </location>
</feature>
<feature type="transmembrane region" description="Helical" evidence="1">
    <location>
        <begin position="380"/>
        <end position="400"/>
    </location>
</feature>
<comment type="function">
    <text evidence="1">Na(+)/H(+) antiporter that extrudes sodium in exchange for external protons.</text>
</comment>
<comment type="catalytic activity">
    <reaction evidence="1">
        <text>Na(+)(in) + 2 H(+)(out) = Na(+)(out) + 2 H(+)(in)</text>
        <dbReference type="Rhea" id="RHEA:29251"/>
        <dbReference type="ChEBI" id="CHEBI:15378"/>
        <dbReference type="ChEBI" id="CHEBI:29101"/>
    </reaction>
    <physiologicalReaction direction="left-to-right" evidence="1">
        <dbReference type="Rhea" id="RHEA:29252"/>
    </physiologicalReaction>
</comment>
<comment type="subcellular location">
    <subcellularLocation>
        <location evidence="1">Cell inner membrane</location>
        <topology evidence="1">Multi-pass membrane protein</topology>
    </subcellularLocation>
</comment>
<comment type="similarity">
    <text evidence="1">Belongs to the NhaA Na(+)/H(+) (TC 2.A.33) antiporter family.</text>
</comment>
<name>NHAA_NITHX</name>
<evidence type="ECO:0000255" key="1">
    <source>
        <dbReference type="HAMAP-Rule" id="MF_01844"/>
    </source>
</evidence>
<proteinExistence type="inferred from homology"/>
<gene>
    <name evidence="1" type="primary">nhaA</name>
    <name type="ordered locus">Nham_4598</name>
</gene>
<dbReference type="EMBL" id="CP000322">
    <property type="protein sequence ID" value="ABE65166.1"/>
    <property type="molecule type" value="Genomic_DNA"/>
</dbReference>
<dbReference type="SMR" id="Q1QF31"/>
<dbReference type="KEGG" id="nha:Nham_4598"/>
<dbReference type="HOGENOM" id="CLU_015803_1_0_5"/>
<dbReference type="OrthoDB" id="9808135at2"/>
<dbReference type="Proteomes" id="UP000001953">
    <property type="component" value="Plasmid pNITHX3"/>
</dbReference>
<dbReference type="GO" id="GO:0005886">
    <property type="term" value="C:plasma membrane"/>
    <property type="evidence" value="ECO:0007669"/>
    <property type="project" value="UniProtKB-SubCell"/>
</dbReference>
<dbReference type="GO" id="GO:0015385">
    <property type="term" value="F:sodium:proton antiporter activity"/>
    <property type="evidence" value="ECO:0007669"/>
    <property type="project" value="TreeGrafter"/>
</dbReference>
<dbReference type="GO" id="GO:0006885">
    <property type="term" value="P:regulation of pH"/>
    <property type="evidence" value="ECO:0007669"/>
    <property type="project" value="InterPro"/>
</dbReference>
<dbReference type="Gene3D" id="1.20.1530.10">
    <property type="entry name" value="Na+/H+ antiporter like domain"/>
    <property type="match status" value="1"/>
</dbReference>
<dbReference type="HAMAP" id="MF_01844">
    <property type="entry name" value="NhaA"/>
    <property type="match status" value="1"/>
</dbReference>
<dbReference type="InterPro" id="IPR023171">
    <property type="entry name" value="Na/H_antiporter_dom_sf"/>
</dbReference>
<dbReference type="InterPro" id="IPR004670">
    <property type="entry name" value="NhaA"/>
</dbReference>
<dbReference type="NCBIfam" id="TIGR00773">
    <property type="entry name" value="NhaA"/>
    <property type="match status" value="1"/>
</dbReference>
<dbReference type="NCBIfam" id="NF007111">
    <property type="entry name" value="PRK09560.1"/>
    <property type="match status" value="1"/>
</dbReference>
<dbReference type="NCBIfam" id="NF007112">
    <property type="entry name" value="PRK09561.1"/>
    <property type="match status" value="1"/>
</dbReference>
<dbReference type="PANTHER" id="PTHR30341:SF0">
    <property type="entry name" value="NA(+)_H(+) ANTIPORTER NHAA"/>
    <property type="match status" value="1"/>
</dbReference>
<dbReference type="PANTHER" id="PTHR30341">
    <property type="entry name" value="SODIUM ION/PROTON ANTIPORTER NHAA-RELATED"/>
    <property type="match status" value="1"/>
</dbReference>
<dbReference type="Pfam" id="PF06965">
    <property type="entry name" value="Na_H_antiport_1"/>
    <property type="match status" value="1"/>
</dbReference>
<reference key="1">
    <citation type="submission" date="2006-03" db="EMBL/GenBank/DDBJ databases">
        <title>Complete sequence of plasmid 3 of Nitrobacter hamburgensis X14.</title>
        <authorList>
            <consortium name="US DOE Joint Genome Institute"/>
            <person name="Copeland A."/>
            <person name="Lucas S."/>
            <person name="Lapidus A."/>
            <person name="Barry K."/>
            <person name="Detter J.C."/>
            <person name="Glavina del Rio T."/>
            <person name="Hammon N."/>
            <person name="Israni S."/>
            <person name="Dalin E."/>
            <person name="Tice H."/>
            <person name="Pitluck S."/>
            <person name="Chain P."/>
            <person name="Malfatti S."/>
            <person name="Shin M."/>
            <person name="Vergez L."/>
            <person name="Schmutz J."/>
            <person name="Larimer F."/>
            <person name="Land M."/>
            <person name="Hauser L."/>
            <person name="Kyrpides N."/>
            <person name="Ivanova N."/>
            <person name="Ward B."/>
            <person name="Arp D."/>
            <person name="Klotz M."/>
            <person name="Stein L."/>
            <person name="O'Mullan G."/>
            <person name="Starkenburg S."/>
            <person name="Sayavedra L."/>
            <person name="Poret-Peterson A.T."/>
            <person name="Gentry M.E."/>
            <person name="Bruce D."/>
            <person name="Richardson P."/>
        </authorList>
    </citation>
    <scope>NUCLEOTIDE SEQUENCE [LARGE SCALE GENOMIC DNA]</scope>
    <source>
        <strain>DSM 10229 / NCIMB 13809 / X14</strain>
    </source>
</reference>
<sequence length="408" mass="43359">MRVRFGQYPNCGKRMVLEPGRLRPYSILRSFLDSEASAGLTLMFVAALALLLANSPFAPVYFDVLHRQVLGLTVLHWINDALMAVFFLLVGLEIKREFLDGQLATWSRRALPGIAALGGMVVPAVIFIAVNGGEPANLRGWAIPSATDIAFALGVLSLLGPRVPVSLKIFLTALAILDDLGAVLIIALFYTAELTPLMLILAAATLLGLAALNRFGVKPLAPYLVLGVVLWFFVLQSGIHATLAGVALALAIPLQASTGGGPTSPLHRLEHALNPWVAFLIVPVFGFANAGVSFAGLGLSALLDPVPLGVALGLFFGKQVGVFGFAWLAIWLKIADMPRYASWAHLYGVAVLCGIGFTMSLFIGLLAYPESAVLQDETKIGVLLGSTLAGLIGWLILRVTKAGFPERT</sequence>
<protein>
    <recommendedName>
        <fullName evidence="1">Na(+)/H(+) antiporter NhaA</fullName>
    </recommendedName>
    <alternativeName>
        <fullName evidence="1">Sodium/proton antiporter NhaA</fullName>
    </alternativeName>
</protein>
<geneLocation type="plasmid">
    <name>pNITHX3</name>
</geneLocation>
<keyword id="KW-0050">Antiport</keyword>
<keyword id="KW-0997">Cell inner membrane</keyword>
<keyword id="KW-1003">Cell membrane</keyword>
<keyword id="KW-0406">Ion transport</keyword>
<keyword id="KW-0472">Membrane</keyword>
<keyword id="KW-0614">Plasmid</keyword>
<keyword id="KW-1185">Reference proteome</keyword>
<keyword id="KW-0915">Sodium</keyword>
<keyword id="KW-0739">Sodium transport</keyword>
<keyword id="KW-0812">Transmembrane</keyword>
<keyword id="KW-1133">Transmembrane helix</keyword>
<keyword id="KW-0813">Transport</keyword>